<reference key="1">
    <citation type="patent" date="1994-05-11" number="WO1994010196">
        <title>Calcium channel blocking polypeptides from theraphosidae aphonopelma.</title>
        <authorList>
            <person name="Nason D.M.I."/>
            <person name="Douglas P."/>
            <person name="Saccomano N.A."/>
            <person name="Volkmann R.A."/>
        </authorList>
    </citation>
    <scope>PROTEIN SEQUENCE</scope>
    <scope>SUBCELLULAR LOCATION</scope>
    <scope>MASS SPECTROMETRY</scope>
    <source>
        <tissue>Venom</tissue>
    </source>
</reference>
<keyword id="KW-0108">Calcium channel impairing toxin</keyword>
<keyword id="KW-0903">Direct protein sequencing</keyword>
<keyword id="KW-1015">Disulfide bond</keyword>
<keyword id="KW-0872">Ion channel impairing toxin</keyword>
<keyword id="KW-0528">Neurotoxin</keyword>
<keyword id="KW-0964">Secreted</keyword>
<keyword id="KW-0800">Toxin</keyword>
<keyword id="KW-1218">Voltage-gated calcium channel impairing toxin</keyword>
<proteinExistence type="evidence at protein level"/>
<name>TX1A_APHSP</name>
<feature type="chain" id="PRO_0000442234" description="Omega-theraphotoxin-Asp1a" evidence="3">
    <location>
        <begin position="1"/>
        <end position="39"/>
    </location>
</feature>
<feature type="disulfide bond" evidence="1">
    <location>
        <begin position="4"/>
        <end position="25"/>
    </location>
</feature>
<feature type="disulfide bond" evidence="1">
    <location>
        <begin position="8"/>
        <end position="31"/>
    </location>
</feature>
<feature type="disulfide bond" evidence="1">
    <location>
        <begin position="17"/>
        <end position="36"/>
    </location>
</feature>
<accession>P0DL81</accession>
<organism>
    <name type="scientific">Aphonopelma sp.</name>
    <name type="common">American tarantula</name>
    <dbReference type="NCBI Taxonomy" id="29932"/>
    <lineage>
        <taxon>Eukaryota</taxon>
        <taxon>Metazoa</taxon>
        <taxon>Ecdysozoa</taxon>
        <taxon>Arthropoda</taxon>
        <taxon>Chelicerata</taxon>
        <taxon>Arachnida</taxon>
        <taxon>Araneae</taxon>
        <taxon>Mygalomorphae</taxon>
        <taxon>Theraphosidae</taxon>
        <taxon>Aphonopelma</taxon>
    </lineage>
</organism>
<dbReference type="SMR" id="P0DL81"/>
<dbReference type="GO" id="GO:0005576">
    <property type="term" value="C:extracellular region"/>
    <property type="evidence" value="ECO:0007669"/>
    <property type="project" value="UniProtKB-SubCell"/>
</dbReference>
<dbReference type="GO" id="GO:0005246">
    <property type="term" value="F:calcium channel regulator activity"/>
    <property type="evidence" value="ECO:0007669"/>
    <property type="project" value="UniProtKB-KW"/>
</dbReference>
<dbReference type="GO" id="GO:0090729">
    <property type="term" value="F:toxin activity"/>
    <property type="evidence" value="ECO:0007669"/>
    <property type="project" value="UniProtKB-KW"/>
</dbReference>
<dbReference type="InterPro" id="IPR012625">
    <property type="entry name" value="Hwtx-2-like"/>
</dbReference>
<dbReference type="Pfam" id="PF08089">
    <property type="entry name" value="Toxin_20"/>
    <property type="match status" value="1"/>
</dbReference>
<dbReference type="SUPFAM" id="SSF57059">
    <property type="entry name" value="omega toxin-like"/>
    <property type="match status" value="1"/>
</dbReference>
<dbReference type="PROSITE" id="PS60022">
    <property type="entry name" value="HWTX_2"/>
    <property type="match status" value="1"/>
</dbReference>
<comment type="function">
    <text evidence="2 3">Toxin that inhibits voltage-gated calcium channels in rat cerebellar granule cells (IC(50)&lt;200 nM) (Ref.1). Is lethal to cockroaches (By similarity).</text>
</comment>
<comment type="subcellular location">
    <subcellularLocation>
        <location evidence="3">Secreted</location>
    </subcellularLocation>
</comment>
<comment type="tissue specificity">
    <text evidence="6">Expressed by the venom gland.</text>
</comment>
<comment type="mass spectrometry"/>
<comment type="similarity">
    <text evidence="5">Belongs to the neurotoxin 12 (Hwtx-2) family. 06 (TXP1) subfamily.</text>
</comment>
<sequence>LFECVLSCDIKKNGKPCKPKGEKKCSGGWRCKINFCLKV</sequence>
<evidence type="ECO:0000250" key="1">
    <source>
        <dbReference type="UniProtKB" id="P0DL80"/>
    </source>
</evidence>
<evidence type="ECO:0000250" key="2">
    <source>
        <dbReference type="UniProtKB" id="P61509"/>
    </source>
</evidence>
<evidence type="ECO:0000269" key="3">
    <source ref="1"/>
</evidence>
<evidence type="ECO:0000303" key="4">
    <source ref="1"/>
</evidence>
<evidence type="ECO:0000305" key="5"/>
<evidence type="ECO:0000305" key="6">
    <source ref="1"/>
</evidence>
<protein>
    <recommendedName>
        <fullName evidence="5">Omega-theraphotoxin-Asp1a</fullName>
        <shortName evidence="5">Omega-TRTX-Asp1a</shortName>
    </recommendedName>
    <alternativeName>
        <fullName evidence="4">Peptide 6-6</fullName>
    </alternativeName>
</protein>